<feature type="chain" id="PRO_1000143732" description="UPF0387 membrane protein YohO">
    <location>
        <begin position="1"/>
        <end position="35"/>
    </location>
</feature>
<feature type="transmembrane region" description="Helical" evidence="1">
    <location>
        <begin position="6"/>
        <end position="26"/>
    </location>
</feature>
<gene>
    <name evidence="1" type="primary">yohO</name>
    <name type="ordered locus">ECIAI39_0869</name>
</gene>
<organism>
    <name type="scientific">Escherichia coli O7:K1 (strain IAI39 / ExPEC)</name>
    <dbReference type="NCBI Taxonomy" id="585057"/>
    <lineage>
        <taxon>Bacteria</taxon>
        <taxon>Pseudomonadati</taxon>
        <taxon>Pseudomonadota</taxon>
        <taxon>Gammaproteobacteria</taxon>
        <taxon>Enterobacterales</taxon>
        <taxon>Enterobacteriaceae</taxon>
        <taxon>Escherichia</taxon>
    </lineage>
</organism>
<keyword id="KW-0997">Cell inner membrane</keyword>
<keyword id="KW-1003">Cell membrane</keyword>
<keyword id="KW-0472">Membrane</keyword>
<keyword id="KW-0812">Transmembrane</keyword>
<keyword id="KW-1133">Transmembrane helix</keyword>
<sequence>MRIAKIGVIALFLFMALGGIGGVMLAGYTFILRAG</sequence>
<proteinExistence type="inferred from homology"/>
<reference key="1">
    <citation type="journal article" date="2009" name="PLoS Genet.">
        <title>Organised genome dynamics in the Escherichia coli species results in highly diverse adaptive paths.</title>
        <authorList>
            <person name="Touchon M."/>
            <person name="Hoede C."/>
            <person name="Tenaillon O."/>
            <person name="Barbe V."/>
            <person name="Baeriswyl S."/>
            <person name="Bidet P."/>
            <person name="Bingen E."/>
            <person name="Bonacorsi S."/>
            <person name="Bouchier C."/>
            <person name="Bouvet O."/>
            <person name="Calteau A."/>
            <person name="Chiapello H."/>
            <person name="Clermont O."/>
            <person name="Cruveiller S."/>
            <person name="Danchin A."/>
            <person name="Diard M."/>
            <person name="Dossat C."/>
            <person name="Karoui M.E."/>
            <person name="Frapy E."/>
            <person name="Garry L."/>
            <person name="Ghigo J.M."/>
            <person name="Gilles A.M."/>
            <person name="Johnson J."/>
            <person name="Le Bouguenec C."/>
            <person name="Lescat M."/>
            <person name="Mangenot S."/>
            <person name="Martinez-Jehanne V."/>
            <person name="Matic I."/>
            <person name="Nassif X."/>
            <person name="Oztas S."/>
            <person name="Petit M.A."/>
            <person name="Pichon C."/>
            <person name="Rouy Z."/>
            <person name="Ruf C.S."/>
            <person name="Schneider D."/>
            <person name="Tourret J."/>
            <person name="Vacherie B."/>
            <person name="Vallenet D."/>
            <person name="Medigue C."/>
            <person name="Rocha E.P.C."/>
            <person name="Denamur E."/>
        </authorList>
    </citation>
    <scope>NUCLEOTIDE SEQUENCE [LARGE SCALE GENOMIC DNA]</scope>
    <source>
        <strain>IAI39 / ExPEC</strain>
    </source>
</reference>
<protein>
    <recommendedName>
        <fullName evidence="1">UPF0387 membrane protein YohO</fullName>
    </recommendedName>
</protein>
<dbReference type="EMBL" id="CU928164">
    <property type="protein sequence ID" value="CAR17006.1"/>
    <property type="molecule type" value="Genomic_DNA"/>
</dbReference>
<dbReference type="RefSeq" id="WP_001216963.1">
    <property type="nucleotide sequence ID" value="NC_011750.1"/>
</dbReference>
<dbReference type="RefSeq" id="YP_002406892.1">
    <property type="nucleotide sequence ID" value="NC_011750.1"/>
</dbReference>
<dbReference type="STRING" id="585057.ECIAI39_0869"/>
<dbReference type="KEGG" id="ect:ECIAI39_0869"/>
<dbReference type="PATRIC" id="fig|585057.6.peg.917"/>
<dbReference type="HOGENOM" id="CLU_220259_0_0_6"/>
<dbReference type="Proteomes" id="UP000000749">
    <property type="component" value="Chromosome"/>
</dbReference>
<dbReference type="GO" id="GO:0005886">
    <property type="term" value="C:plasma membrane"/>
    <property type="evidence" value="ECO:0007669"/>
    <property type="project" value="UniProtKB-SubCell"/>
</dbReference>
<dbReference type="HAMAP" id="MF_01362">
    <property type="entry name" value="UPF0387"/>
    <property type="match status" value="1"/>
</dbReference>
<dbReference type="InterPro" id="IPR020870">
    <property type="entry name" value="UPF0387_membrane"/>
</dbReference>
<dbReference type="NCBIfam" id="NF010225">
    <property type="entry name" value="PRK13681.1"/>
    <property type="match status" value="1"/>
</dbReference>
<evidence type="ECO:0000255" key="1">
    <source>
        <dbReference type="HAMAP-Rule" id="MF_01362"/>
    </source>
</evidence>
<name>YOHO_ECO7I</name>
<accession>B7NPI5</accession>
<comment type="subcellular location">
    <subcellularLocation>
        <location evidence="1">Cell inner membrane</location>
        <topology evidence="1">Single-pass membrane protein</topology>
    </subcellularLocation>
</comment>
<comment type="similarity">
    <text evidence="1">Belongs to the UPF0387 family.</text>
</comment>